<dbReference type="SMR" id="P0C1R3"/>
<dbReference type="ArachnoServer" id="AS000306">
    <property type="toxin name" value="delta-hexatoxin-Iw1a"/>
</dbReference>
<dbReference type="GO" id="GO:0005576">
    <property type="term" value="C:extracellular region"/>
    <property type="evidence" value="ECO:0007669"/>
    <property type="project" value="UniProtKB-SubCell"/>
</dbReference>
<dbReference type="GO" id="GO:0019871">
    <property type="term" value="F:sodium channel inhibitor activity"/>
    <property type="evidence" value="ECO:0007669"/>
    <property type="project" value="InterPro"/>
</dbReference>
<dbReference type="GO" id="GO:0090729">
    <property type="term" value="F:toxin activity"/>
    <property type="evidence" value="ECO:0007669"/>
    <property type="project" value="UniProtKB-KW"/>
</dbReference>
<dbReference type="Gene3D" id="4.10.40.10">
    <property type="match status" value="1"/>
</dbReference>
<dbReference type="InterPro" id="IPR008017">
    <property type="entry name" value="Delta-hexatoxin"/>
</dbReference>
<dbReference type="Pfam" id="PF05353">
    <property type="entry name" value="Atracotoxin"/>
    <property type="match status" value="1"/>
</dbReference>
<dbReference type="SUPFAM" id="SSF57059">
    <property type="entry name" value="omega toxin-like"/>
    <property type="match status" value="1"/>
</dbReference>
<dbReference type="PROSITE" id="PS60018">
    <property type="entry name" value="DELTA_ACTX"/>
    <property type="match status" value="1"/>
</dbReference>
<proteinExistence type="evidence at protein level"/>
<accession>P0C1R3</accession>
<feature type="chain" id="PRO_0000247526" description="Delta-hexatoxin-Iw1a" evidence="3">
    <location>
        <begin position="1"/>
        <end position="42"/>
    </location>
</feature>
<feature type="disulfide bond" evidence="2">
    <location>
        <begin position="1"/>
        <end position="15"/>
    </location>
</feature>
<feature type="disulfide bond" evidence="2">
    <location>
        <begin position="8"/>
        <end position="20"/>
    </location>
</feature>
<feature type="disulfide bond" evidence="2">
    <location>
        <begin position="14"/>
        <end position="31"/>
    </location>
</feature>
<feature type="disulfide bond" evidence="2">
    <location>
        <begin position="16"/>
        <end position="42"/>
    </location>
</feature>
<reference key="1">
    <citation type="journal article" date="2004" name="Toxicon">
        <title>Structure and function of delta-atracotoxins: lethal neurotoxins targeting the voltage-gated sodium channel.</title>
        <authorList>
            <person name="Nicholson G.M."/>
            <person name="Little M.J."/>
            <person name="Birinyi-Strachan L.C."/>
        </authorList>
    </citation>
    <scope>PROTEIN SEQUENCE</scope>
    <scope>SUBCELLULAR LOCATION</scope>
    <source>
        <tissue>Venom</tissue>
    </source>
</reference>
<organism>
    <name type="scientific">Illawarra wisharti</name>
    <name type="common">Illawarra funnel-web spider</name>
    <dbReference type="NCBI Taxonomy" id="278061"/>
    <lineage>
        <taxon>Eukaryota</taxon>
        <taxon>Metazoa</taxon>
        <taxon>Ecdysozoa</taxon>
        <taxon>Arthropoda</taxon>
        <taxon>Chelicerata</taxon>
        <taxon>Arachnida</taxon>
        <taxon>Araneae</taxon>
        <taxon>Mygalomorphae</taxon>
        <taxon>Hexathelidae</taxon>
        <taxon>Hadronyche</taxon>
    </lineage>
</organism>
<protein>
    <recommendedName>
        <fullName evidence="5">Delta-hexatoxin-Iw1a</fullName>
        <shortName evidence="5">Delta-HXTX-Iw1a</shortName>
    </recommendedName>
    <alternativeName>
        <fullName evidence="4">Delta-atracotoxin-Hs20.1a</fullName>
        <shortName evidence="4">Delta-ACTX-Hs20.1a</shortName>
    </alternativeName>
</protein>
<evidence type="ECO:0000250" key="1">
    <source>
        <dbReference type="UniProtKB" id="P01478"/>
    </source>
</evidence>
<evidence type="ECO:0000250" key="2">
    <source>
        <dbReference type="UniProtKB" id="P13494"/>
    </source>
</evidence>
<evidence type="ECO:0000269" key="3">
    <source>
    </source>
</evidence>
<evidence type="ECO:0000303" key="4">
    <source>
    </source>
</evidence>
<evidence type="ECO:0000305" key="5"/>
<evidence type="ECO:0000305" key="6">
    <source>
    </source>
</evidence>
<sequence length="42" mass="4843">CAKKRNWCGKNEDCCCPMKCIYAWYNQQGSCQSTITGLFKKC</sequence>
<keyword id="KW-0903">Direct protein sequencing</keyword>
<keyword id="KW-1015">Disulfide bond</keyword>
<keyword id="KW-0872">Ion channel impairing toxin</keyword>
<keyword id="KW-0960">Knottin</keyword>
<keyword id="KW-0528">Neurotoxin</keyword>
<keyword id="KW-0964">Secreted</keyword>
<keyword id="KW-0800">Toxin</keyword>
<keyword id="KW-0738">Voltage-gated sodium channel impairing toxin</keyword>
<name>D1A_ILLWI</name>
<comment type="function">
    <text evidence="3">Inhibits tetrodotoxin-sensitive sodium channels by binding to site 3. It slows the inactivation, causes a prolongation of action potential duration resulting in repetitive firing in autonomic and motor nerve fibers. Does not depolarize the resting potential. Does not affect tetrodotoxin-resistant sodium channels. This lethal neurotoxin is active on both insect and mammalian voltage-gated sodium channels (Nav).</text>
</comment>
<comment type="subcellular location">
    <subcellularLocation>
        <location evidence="3">Secreted</location>
    </subcellularLocation>
</comment>
<comment type="tissue specificity">
    <text evidence="6">Expressed by the venom gland.</text>
</comment>
<comment type="domain">
    <text evidence="1">The presence of a 'disulfide through disulfide knot' structurally defines this protein as a knottin.</text>
</comment>
<comment type="similarity">
    <text evidence="5">Belongs to the neurotoxin 06 (delta-actx) family.</text>
</comment>